<protein>
    <recommendedName>
        <fullName evidence="1">Ribonuclease PH</fullName>
        <shortName evidence="1">RNase PH</shortName>
        <ecNumber evidence="1">2.7.7.56</ecNumber>
    </recommendedName>
    <alternativeName>
        <fullName evidence="1">tRNA nucleotidyltransferase</fullName>
    </alternativeName>
</protein>
<accession>B8E0G7</accession>
<dbReference type="EC" id="2.7.7.56" evidence="1"/>
<dbReference type="EMBL" id="CP001251">
    <property type="protein sequence ID" value="ACK42612.1"/>
    <property type="molecule type" value="Genomic_DNA"/>
</dbReference>
<dbReference type="RefSeq" id="WP_012583693.1">
    <property type="nucleotide sequence ID" value="NC_011661.1"/>
</dbReference>
<dbReference type="RefSeq" id="YP_002353226.1">
    <property type="nucleotide sequence ID" value="NC_011661.1"/>
</dbReference>
<dbReference type="SMR" id="B8E0G7"/>
<dbReference type="FunCoup" id="B8E0G7">
    <property type="interactions" value="264"/>
</dbReference>
<dbReference type="STRING" id="515635.Dtur_1338"/>
<dbReference type="EnsemblBacteria" id="ACK42612">
    <property type="protein sequence ID" value="ACK42612"/>
    <property type="gene ID" value="Dtur_1338"/>
</dbReference>
<dbReference type="KEGG" id="dtu:Dtur_1338"/>
<dbReference type="PATRIC" id="fig|515635.4.peg.1383"/>
<dbReference type="eggNOG" id="COG0689">
    <property type="taxonomic scope" value="Bacteria"/>
</dbReference>
<dbReference type="HOGENOM" id="CLU_050858_0_0_0"/>
<dbReference type="InParanoid" id="B8E0G7"/>
<dbReference type="OrthoDB" id="9807456at2"/>
<dbReference type="Proteomes" id="UP000007719">
    <property type="component" value="Chromosome"/>
</dbReference>
<dbReference type="GO" id="GO:0000175">
    <property type="term" value="F:3'-5'-RNA exonuclease activity"/>
    <property type="evidence" value="ECO:0007669"/>
    <property type="project" value="UniProtKB-UniRule"/>
</dbReference>
<dbReference type="GO" id="GO:0003723">
    <property type="term" value="F:RNA binding"/>
    <property type="evidence" value="ECO:0000318"/>
    <property type="project" value="GO_Central"/>
</dbReference>
<dbReference type="GO" id="GO:0000049">
    <property type="term" value="F:tRNA binding"/>
    <property type="evidence" value="ECO:0007669"/>
    <property type="project" value="UniProtKB-UniRule"/>
</dbReference>
<dbReference type="GO" id="GO:0009022">
    <property type="term" value="F:tRNA nucleotidyltransferase activity"/>
    <property type="evidence" value="ECO:0007669"/>
    <property type="project" value="UniProtKB-UniRule"/>
</dbReference>
<dbReference type="GO" id="GO:0016075">
    <property type="term" value="P:rRNA catabolic process"/>
    <property type="evidence" value="ECO:0000318"/>
    <property type="project" value="GO_Central"/>
</dbReference>
<dbReference type="GO" id="GO:0006364">
    <property type="term" value="P:rRNA processing"/>
    <property type="evidence" value="ECO:0007669"/>
    <property type="project" value="UniProtKB-KW"/>
</dbReference>
<dbReference type="GO" id="GO:0008033">
    <property type="term" value="P:tRNA processing"/>
    <property type="evidence" value="ECO:0007669"/>
    <property type="project" value="UniProtKB-UniRule"/>
</dbReference>
<dbReference type="CDD" id="cd11362">
    <property type="entry name" value="RNase_PH_bact"/>
    <property type="match status" value="1"/>
</dbReference>
<dbReference type="FunFam" id="3.30.230.70:FF:000003">
    <property type="entry name" value="Ribonuclease PH"/>
    <property type="match status" value="1"/>
</dbReference>
<dbReference type="Gene3D" id="3.30.230.70">
    <property type="entry name" value="GHMP Kinase, N-terminal domain"/>
    <property type="match status" value="1"/>
</dbReference>
<dbReference type="HAMAP" id="MF_00564">
    <property type="entry name" value="RNase_PH"/>
    <property type="match status" value="1"/>
</dbReference>
<dbReference type="InterPro" id="IPR001247">
    <property type="entry name" value="ExoRNase_PH_dom1"/>
</dbReference>
<dbReference type="InterPro" id="IPR015847">
    <property type="entry name" value="ExoRNase_PH_dom2"/>
</dbReference>
<dbReference type="InterPro" id="IPR036345">
    <property type="entry name" value="ExoRNase_PH_dom2_sf"/>
</dbReference>
<dbReference type="InterPro" id="IPR027408">
    <property type="entry name" value="PNPase/RNase_PH_dom_sf"/>
</dbReference>
<dbReference type="InterPro" id="IPR020568">
    <property type="entry name" value="Ribosomal_Su5_D2-typ_SF"/>
</dbReference>
<dbReference type="InterPro" id="IPR050080">
    <property type="entry name" value="RNase_PH"/>
</dbReference>
<dbReference type="InterPro" id="IPR002381">
    <property type="entry name" value="RNase_PH_bac-type"/>
</dbReference>
<dbReference type="InterPro" id="IPR018336">
    <property type="entry name" value="RNase_PH_CS"/>
</dbReference>
<dbReference type="NCBIfam" id="TIGR01966">
    <property type="entry name" value="RNasePH"/>
    <property type="match status" value="1"/>
</dbReference>
<dbReference type="PANTHER" id="PTHR11953">
    <property type="entry name" value="EXOSOME COMPLEX COMPONENT"/>
    <property type="match status" value="1"/>
</dbReference>
<dbReference type="PANTHER" id="PTHR11953:SF0">
    <property type="entry name" value="EXOSOME COMPLEX COMPONENT RRP41"/>
    <property type="match status" value="1"/>
</dbReference>
<dbReference type="Pfam" id="PF01138">
    <property type="entry name" value="RNase_PH"/>
    <property type="match status" value="1"/>
</dbReference>
<dbReference type="Pfam" id="PF03725">
    <property type="entry name" value="RNase_PH_C"/>
    <property type="match status" value="1"/>
</dbReference>
<dbReference type="SUPFAM" id="SSF55666">
    <property type="entry name" value="Ribonuclease PH domain 2-like"/>
    <property type="match status" value="1"/>
</dbReference>
<dbReference type="SUPFAM" id="SSF54211">
    <property type="entry name" value="Ribosomal protein S5 domain 2-like"/>
    <property type="match status" value="1"/>
</dbReference>
<dbReference type="PROSITE" id="PS01277">
    <property type="entry name" value="RIBONUCLEASE_PH"/>
    <property type="match status" value="1"/>
</dbReference>
<gene>
    <name evidence="1" type="primary">rph</name>
    <name type="ordered locus">Dtur_1338</name>
</gene>
<name>RNPH_DICTD</name>
<evidence type="ECO:0000255" key="1">
    <source>
        <dbReference type="HAMAP-Rule" id="MF_00564"/>
    </source>
</evidence>
<comment type="function">
    <text evidence="1">Phosphorolytic 3'-5' exoribonuclease that plays an important role in tRNA 3'-end maturation. Removes nucleotide residues following the 3'-CCA terminus of tRNAs; can also add nucleotides to the ends of RNA molecules by using nucleoside diphosphates as substrates, but this may not be physiologically important. Probably plays a role in initiation of 16S rRNA degradation (leading to ribosome degradation) during starvation.</text>
</comment>
<comment type="catalytic activity">
    <reaction evidence="1">
        <text>tRNA(n+1) + phosphate = tRNA(n) + a ribonucleoside 5'-diphosphate</text>
        <dbReference type="Rhea" id="RHEA:10628"/>
        <dbReference type="Rhea" id="RHEA-COMP:17343"/>
        <dbReference type="Rhea" id="RHEA-COMP:17344"/>
        <dbReference type="ChEBI" id="CHEBI:43474"/>
        <dbReference type="ChEBI" id="CHEBI:57930"/>
        <dbReference type="ChEBI" id="CHEBI:173114"/>
        <dbReference type="EC" id="2.7.7.56"/>
    </reaction>
</comment>
<comment type="subunit">
    <text evidence="1">Homohexameric ring arranged as a trimer of dimers.</text>
</comment>
<comment type="similarity">
    <text evidence="1">Belongs to the RNase PH family.</text>
</comment>
<keyword id="KW-0548">Nucleotidyltransferase</keyword>
<keyword id="KW-1185">Reference proteome</keyword>
<keyword id="KW-0694">RNA-binding</keyword>
<keyword id="KW-0698">rRNA processing</keyword>
<keyword id="KW-0808">Transferase</keyword>
<keyword id="KW-0819">tRNA processing</keyword>
<keyword id="KW-0820">tRNA-binding</keyword>
<reference key="1">
    <citation type="journal article" date="2016" name="Front. Microbiol.">
        <title>The complete genome sequence of hyperthermophile Dictyoglomus turgidum DSM 6724 reveals a specialized carbohydrate fermentor.</title>
        <authorList>
            <person name="Brumm P.J."/>
            <person name="Gowda K."/>
            <person name="Robb F.T."/>
            <person name="Mead D.A."/>
        </authorList>
    </citation>
    <scope>NUCLEOTIDE SEQUENCE [LARGE SCALE GENOMIC DNA]</scope>
    <source>
        <strain>DSM 6724 / Z-1310</strain>
    </source>
</reference>
<sequence>MVRIDKRSNTDLRPVKITRKYLKYPLGSVLIEMGETKVICTVSMEEKVPPFLKGTNQGWLTAEYGMLPGSTPERKVRDVVKGAINGRSQEIQRLIGRSLRAVVDFSKLGERTIWIDADVIQADGGTRTAAITGAFVALYDALEKLKREGIIKEIPIREFVAAVSVGIVDGEILLDLSANEDMRAEVDMNVVMTESGKFVEIQGTAEKTPFTHEQLQHMLNLAKQGIMRLIEIQKKTLGLL</sequence>
<feature type="chain" id="PRO_1000129338" description="Ribonuclease PH">
    <location>
        <begin position="1"/>
        <end position="240"/>
    </location>
</feature>
<feature type="binding site" evidence="1">
    <location>
        <position position="87"/>
    </location>
    <ligand>
        <name>phosphate</name>
        <dbReference type="ChEBI" id="CHEBI:43474"/>
        <note>substrate</note>
    </ligand>
</feature>
<feature type="binding site" evidence="1">
    <location>
        <begin position="125"/>
        <end position="127"/>
    </location>
    <ligand>
        <name>phosphate</name>
        <dbReference type="ChEBI" id="CHEBI:43474"/>
        <note>substrate</note>
    </ligand>
</feature>
<proteinExistence type="inferred from homology"/>
<organism>
    <name type="scientific">Dictyoglomus turgidum (strain DSM 6724 / Z-1310)</name>
    <dbReference type="NCBI Taxonomy" id="515635"/>
    <lineage>
        <taxon>Bacteria</taxon>
        <taxon>Pseudomonadati</taxon>
        <taxon>Dictyoglomota</taxon>
        <taxon>Dictyoglomia</taxon>
        <taxon>Dictyoglomales</taxon>
        <taxon>Dictyoglomaceae</taxon>
        <taxon>Dictyoglomus</taxon>
    </lineage>
</organism>